<gene>
    <name type="primary">IWR1</name>
    <name type="ordered locus">YDL115C</name>
</gene>
<evidence type="ECO:0000256" key="1">
    <source>
        <dbReference type="SAM" id="MobiDB-lite"/>
    </source>
</evidence>
<evidence type="ECO:0000269" key="2">
    <source>
    </source>
</evidence>
<evidence type="ECO:0000269" key="3">
    <source>
    </source>
</evidence>
<evidence type="ECO:0000269" key="4">
    <source>
    </source>
</evidence>
<evidence type="ECO:0000269" key="5">
    <source>
    </source>
</evidence>
<evidence type="ECO:0000269" key="6">
    <source>
    </source>
</evidence>
<evidence type="ECO:0000269" key="7">
    <source>
    </source>
</evidence>
<evidence type="ECO:0000305" key="8"/>
<evidence type="ECO:0000305" key="9">
    <source>
    </source>
</evidence>
<evidence type="ECO:0000305" key="10">
    <source>
    </source>
</evidence>
<evidence type="ECO:0007744" key="11">
    <source>
    </source>
</evidence>
<feature type="initiator methionine" description="Removed" evidence="11">
    <location>
        <position position="1"/>
    </location>
</feature>
<feature type="chain" id="PRO_0000255269" description="RNA polymerase II nuclear localization protein IWR1">
    <location>
        <begin position="2"/>
        <end position="353"/>
    </location>
</feature>
<feature type="region of interest" description="Disordered" evidence="1">
    <location>
        <begin position="77"/>
        <end position="111"/>
    </location>
</feature>
<feature type="region of interest" description="Disordered" evidence="1">
    <location>
        <begin position="192"/>
        <end position="226"/>
    </location>
</feature>
<feature type="region of interest" description="Disordered" evidence="1">
    <location>
        <begin position="300"/>
        <end position="321"/>
    </location>
</feature>
<feature type="short sequence motif" description="Bipartite nuclear localization signal">
    <location>
        <begin position="10"/>
        <end position="43"/>
    </location>
</feature>
<feature type="compositionally biased region" description="Basic and acidic residues" evidence="1">
    <location>
        <begin position="77"/>
        <end position="92"/>
    </location>
</feature>
<feature type="compositionally biased region" description="Acidic residues" evidence="1">
    <location>
        <begin position="192"/>
        <end position="208"/>
    </location>
</feature>
<feature type="compositionally biased region" description="Acidic residues" evidence="1">
    <location>
        <begin position="300"/>
        <end position="319"/>
    </location>
</feature>
<feature type="modified residue" description="N-acetylserine" evidence="11">
    <location>
        <position position="2"/>
    </location>
</feature>
<sequence length="353" mass="40640">MSTISTTTAPEFIRVKRRRDEDSVQALLIDEGKRVKKQKFIFKLSKTVSSESYQSEQESSTPLLKLAHEDHRHFVLEQRKKSRRDSDDEKSQQRLAAEGSTVDDDGLPPEINQMVNDYLKLNKGVEKTERKKPSRKYFTGDSAKIASLPSLDYVFDIYHLEKIHDDEVARYNNEKNIGFVKIIEHIDLALDEESDPNEARSDDEDSNDENYYQNDYPEDEDDDRSILFGSEGEDIAALGEEIVIGVNKSRFSSWNDDKIQGSNGYHDVEEEYGDLFNRLGGKSDVLKSINSSNFIDLDGQEGEIEISDNEDDSDEGDDIEYPRNEFFPTDVDDPLAHHRDRIFHQLQKKINRS</sequence>
<name>IWR1_YEAST</name>
<keyword id="KW-0007">Acetylation</keyword>
<keyword id="KW-0963">Cytoplasm</keyword>
<keyword id="KW-0539">Nucleus</keyword>
<keyword id="KW-0653">Protein transport</keyword>
<keyword id="KW-1185">Reference proteome</keyword>
<keyword id="KW-0813">Transport</keyword>
<protein>
    <recommendedName>
        <fullName>RNA polymerase II nuclear localization protein IWR1</fullName>
    </recommendedName>
    <alternativeName>
        <fullName>Interacting with RNA polymerase II protein 1</fullName>
    </alternativeName>
</protein>
<organism>
    <name type="scientific">Saccharomyces cerevisiae (strain ATCC 204508 / S288c)</name>
    <name type="common">Baker's yeast</name>
    <dbReference type="NCBI Taxonomy" id="559292"/>
    <lineage>
        <taxon>Eukaryota</taxon>
        <taxon>Fungi</taxon>
        <taxon>Dikarya</taxon>
        <taxon>Ascomycota</taxon>
        <taxon>Saccharomycotina</taxon>
        <taxon>Saccharomycetes</taxon>
        <taxon>Saccharomycetales</taxon>
        <taxon>Saccharomycetaceae</taxon>
        <taxon>Saccharomyces</taxon>
    </lineage>
</organism>
<reference key="1">
    <citation type="journal article" date="1997" name="Nature">
        <title>The nucleotide sequence of Saccharomyces cerevisiae chromosome IV.</title>
        <authorList>
            <person name="Jacq C."/>
            <person name="Alt-Moerbe J."/>
            <person name="Andre B."/>
            <person name="Arnold W."/>
            <person name="Bahr A."/>
            <person name="Ballesta J.P.G."/>
            <person name="Bargues M."/>
            <person name="Baron L."/>
            <person name="Becker A."/>
            <person name="Biteau N."/>
            <person name="Bloecker H."/>
            <person name="Blugeon C."/>
            <person name="Boskovic J."/>
            <person name="Brandt P."/>
            <person name="Brueckner M."/>
            <person name="Buitrago M.J."/>
            <person name="Coster F."/>
            <person name="Delaveau T."/>
            <person name="del Rey F."/>
            <person name="Dujon B."/>
            <person name="Eide L.G."/>
            <person name="Garcia-Cantalejo J.M."/>
            <person name="Goffeau A."/>
            <person name="Gomez-Peris A."/>
            <person name="Granotier C."/>
            <person name="Hanemann V."/>
            <person name="Hankeln T."/>
            <person name="Hoheisel J.D."/>
            <person name="Jaeger W."/>
            <person name="Jimenez A."/>
            <person name="Jonniaux J.-L."/>
            <person name="Kraemer C."/>
            <person name="Kuester H."/>
            <person name="Laamanen P."/>
            <person name="Legros Y."/>
            <person name="Louis E.J."/>
            <person name="Moeller-Rieker S."/>
            <person name="Monnet A."/>
            <person name="Moro M."/>
            <person name="Mueller-Auer S."/>
            <person name="Nussbaumer B."/>
            <person name="Paricio N."/>
            <person name="Paulin L."/>
            <person name="Perea J."/>
            <person name="Perez-Alonso M."/>
            <person name="Perez-Ortin J.E."/>
            <person name="Pohl T.M."/>
            <person name="Prydz H."/>
            <person name="Purnelle B."/>
            <person name="Rasmussen S.W."/>
            <person name="Remacha M.A."/>
            <person name="Revuelta J.L."/>
            <person name="Rieger M."/>
            <person name="Salom D."/>
            <person name="Saluz H.P."/>
            <person name="Saiz J.E."/>
            <person name="Saren A.-M."/>
            <person name="Schaefer M."/>
            <person name="Scharfe M."/>
            <person name="Schmidt E.R."/>
            <person name="Schneider C."/>
            <person name="Scholler P."/>
            <person name="Schwarz S."/>
            <person name="Soler-Mira A."/>
            <person name="Urrestarazu L.A."/>
            <person name="Verhasselt P."/>
            <person name="Vissers S."/>
            <person name="Voet M."/>
            <person name="Volckaert G."/>
            <person name="Wagner G."/>
            <person name="Wambutt R."/>
            <person name="Wedler E."/>
            <person name="Wedler H."/>
            <person name="Woelfl S."/>
            <person name="Harris D.E."/>
            <person name="Bowman S."/>
            <person name="Brown D."/>
            <person name="Churcher C.M."/>
            <person name="Connor R."/>
            <person name="Dedman K."/>
            <person name="Gentles S."/>
            <person name="Hamlin N."/>
            <person name="Hunt S."/>
            <person name="Jones L."/>
            <person name="McDonald S."/>
            <person name="Murphy L.D."/>
            <person name="Niblett D."/>
            <person name="Odell C."/>
            <person name="Oliver K."/>
            <person name="Rajandream M.A."/>
            <person name="Richards C."/>
            <person name="Shore L."/>
            <person name="Walsh S.V."/>
            <person name="Barrell B.G."/>
            <person name="Dietrich F.S."/>
            <person name="Mulligan J.T."/>
            <person name="Allen E."/>
            <person name="Araujo R."/>
            <person name="Aviles E."/>
            <person name="Berno A."/>
            <person name="Carpenter J."/>
            <person name="Chen E."/>
            <person name="Cherry J.M."/>
            <person name="Chung E."/>
            <person name="Duncan M."/>
            <person name="Hunicke-Smith S."/>
            <person name="Hyman R.W."/>
            <person name="Komp C."/>
            <person name="Lashkari D."/>
            <person name="Lew H."/>
            <person name="Lin D."/>
            <person name="Mosedale D."/>
            <person name="Nakahara K."/>
            <person name="Namath A."/>
            <person name="Oefner P."/>
            <person name="Oh C."/>
            <person name="Petel F.X."/>
            <person name="Roberts D."/>
            <person name="Schramm S."/>
            <person name="Schroeder M."/>
            <person name="Shogren T."/>
            <person name="Shroff N."/>
            <person name="Winant A."/>
            <person name="Yelton M.A."/>
            <person name="Botstein D."/>
            <person name="Davis R.W."/>
            <person name="Johnston M."/>
            <person name="Andrews S."/>
            <person name="Brinkman R."/>
            <person name="Cooper J."/>
            <person name="Ding H."/>
            <person name="Du Z."/>
            <person name="Favello A."/>
            <person name="Fulton L."/>
            <person name="Gattung S."/>
            <person name="Greco T."/>
            <person name="Hallsworth K."/>
            <person name="Hawkins J."/>
            <person name="Hillier L.W."/>
            <person name="Jier M."/>
            <person name="Johnson D."/>
            <person name="Johnston L."/>
            <person name="Kirsten J."/>
            <person name="Kucaba T."/>
            <person name="Langston Y."/>
            <person name="Latreille P."/>
            <person name="Le T."/>
            <person name="Mardis E."/>
            <person name="Menezes S."/>
            <person name="Miller N."/>
            <person name="Nhan M."/>
            <person name="Pauley A."/>
            <person name="Peluso D."/>
            <person name="Rifkin L."/>
            <person name="Riles L."/>
            <person name="Taich A."/>
            <person name="Trevaskis E."/>
            <person name="Vignati D."/>
            <person name="Wilcox L."/>
            <person name="Wohldman P."/>
            <person name="Vaudin M."/>
            <person name="Wilson R."/>
            <person name="Waterston R."/>
            <person name="Albermann K."/>
            <person name="Hani J."/>
            <person name="Heumann K."/>
            <person name="Kleine K."/>
            <person name="Mewes H.-W."/>
            <person name="Zollner A."/>
            <person name="Zaccaria P."/>
        </authorList>
    </citation>
    <scope>NUCLEOTIDE SEQUENCE [LARGE SCALE GENOMIC DNA]</scope>
    <source>
        <strain>ATCC 204508 / S288c</strain>
    </source>
</reference>
<reference key="2">
    <citation type="journal article" date="2014" name="G3 (Bethesda)">
        <title>The reference genome sequence of Saccharomyces cerevisiae: Then and now.</title>
        <authorList>
            <person name="Engel S.R."/>
            <person name="Dietrich F.S."/>
            <person name="Fisk D.G."/>
            <person name="Binkley G."/>
            <person name="Balakrishnan R."/>
            <person name="Costanzo M.C."/>
            <person name="Dwight S.S."/>
            <person name="Hitz B.C."/>
            <person name="Karra K."/>
            <person name="Nash R.S."/>
            <person name="Weng S."/>
            <person name="Wong E.D."/>
            <person name="Lloyd P."/>
            <person name="Skrzypek M.S."/>
            <person name="Miyasato S.R."/>
            <person name="Simison M."/>
            <person name="Cherry J.M."/>
        </authorList>
    </citation>
    <scope>GENOME REANNOTATION</scope>
    <source>
        <strain>ATCC 204508 / S288c</strain>
    </source>
</reference>
<reference key="3">
    <citation type="journal article" date="2007" name="Proc. Natl. Acad. Sci. U.S.A.">
        <title>High-density yeast-tiling array reveals previously undiscovered introns and extensive regulation of meiotic splicing.</title>
        <authorList>
            <person name="Juneau K."/>
            <person name="Palm C."/>
            <person name="Miranda M."/>
            <person name="Davis R.W."/>
        </authorList>
    </citation>
    <scope>NUCLEOTIDE SEQUENCE [MRNA] OF 1-227</scope>
    <source>
        <strain>ATCC 201390 / BY4743</strain>
    </source>
</reference>
<reference key="4">
    <citation type="journal article" date="2007" name="Genome Res.">
        <title>Approaching a complete repository of sequence-verified protein-encoding clones for Saccharomyces cerevisiae.</title>
        <authorList>
            <person name="Hu Y."/>
            <person name="Rolfs A."/>
            <person name="Bhullar B."/>
            <person name="Murthy T.V.S."/>
            <person name="Zhu C."/>
            <person name="Berger M.F."/>
            <person name="Camargo A.A."/>
            <person name="Kelley F."/>
            <person name="McCarron S."/>
            <person name="Jepson D."/>
            <person name="Richardson A."/>
            <person name="Raphael J."/>
            <person name="Moreira D."/>
            <person name="Taycher E."/>
            <person name="Zuo D."/>
            <person name="Mohr S."/>
            <person name="Kane M.F."/>
            <person name="Williamson J."/>
            <person name="Simpson A.J.G."/>
            <person name="Bulyk M.L."/>
            <person name="Harlow E."/>
            <person name="Marsischky G."/>
            <person name="Kolodner R.D."/>
            <person name="LaBaer J."/>
        </authorList>
    </citation>
    <scope>NUCLEOTIDE SEQUENCE [GENOMIC DNA] OF 114-353</scope>
    <source>
        <strain>ATCC 204508 / S288c</strain>
    </source>
</reference>
<reference key="5">
    <citation type="journal article" date="2003" name="Genetics">
        <title>A Saccharomyces cerevisiae genome-wide mutant screen for altered sensitivity to K1 killer toxin.</title>
        <authorList>
            <person name="Page N."/>
            <person name="Gerard-Vincent M."/>
            <person name="Menard P."/>
            <person name="Beaulieu M."/>
            <person name="Azuma M."/>
            <person name="Dijkgraaf G.J.P."/>
            <person name="Li H."/>
            <person name="Marcoux J."/>
            <person name="Nguyen T."/>
            <person name="Dowse T."/>
            <person name="Sdicu A.-M."/>
            <person name="Bussey H."/>
        </authorList>
    </citation>
    <scope>FUNCTION</scope>
</reference>
<reference key="6">
    <citation type="journal article" date="2003" name="Nature">
        <title>Global analysis of protein localization in budding yeast.</title>
        <authorList>
            <person name="Huh W.-K."/>
            <person name="Falvo J.V."/>
            <person name="Gerke L.C."/>
            <person name="Carroll A.S."/>
            <person name="Howson R.W."/>
            <person name="Weissman J.S."/>
            <person name="O'Shea E.K."/>
        </authorList>
    </citation>
    <scope>SUBCELLULAR LOCATION [LARGE SCALE ANALYSIS]</scope>
</reference>
<reference key="7">
    <citation type="journal article" date="2003" name="Nature">
        <title>Global analysis of protein expression in yeast.</title>
        <authorList>
            <person name="Ghaemmaghami S."/>
            <person name="Huh W.-K."/>
            <person name="Bower K."/>
            <person name="Howson R.W."/>
            <person name="Belle A."/>
            <person name="Dephoure N."/>
            <person name="O'Shea E.K."/>
            <person name="Weissman J.S."/>
        </authorList>
    </citation>
    <scope>LEVEL OF PROTEIN EXPRESSION [LARGE SCALE ANALYSIS]</scope>
</reference>
<reference key="8">
    <citation type="journal article" date="2006" name="Nature">
        <title>Global landscape of protein complexes in the yeast Saccharomyces cerevisiae.</title>
        <authorList>
            <person name="Krogan N.J."/>
            <person name="Cagney G."/>
            <person name="Yu H."/>
            <person name="Zhong G."/>
            <person name="Guo X."/>
            <person name="Ignatchenko A."/>
            <person name="Li J."/>
            <person name="Pu S."/>
            <person name="Datta N."/>
            <person name="Tikuisis A.P."/>
            <person name="Punna T."/>
            <person name="Peregrin-Alvarez J.M."/>
            <person name="Shales M."/>
            <person name="Zhang X."/>
            <person name="Davey M."/>
            <person name="Robinson M.D."/>
            <person name="Paccanaro A."/>
            <person name="Bray J.E."/>
            <person name="Sheung A."/>
            <person name="Beattie B."/>
            <person name="Richards D.P."/>
            <person name="Canadien V."/>
            <person name="Lalev A."/>
            <person name="Mena F."/>
            <person name="Wong P."/>
            <person name="Starostine A."/>
            <person name="Canete M.M."/>
            <person name="Vlasblom J."/>
            <person name="Wu S."/>
            <person name="Orsi C."/>
            <person name="Collins S.R."/>
            <person name="Chandran S."/>
            <person name="Haw R."/>
            <person name="Rilstone J.J."/>
            <person name="Gandi K."/>
            <person name="Thompson N.J."/>
            <person name="Musso G."/>
            <person name="St Onge P."/>
            <person name="Ghanny S."/>
            <person name="Lam M.H."/>
            <person name="Butland G."/>
            <person name="Altaf-Ul A.M."/>
            <person name="Kanaya S."/>
            <person name="Shilatifard A."/>
            <person name="O'Shea E.K."/>
            <person name="Weissman J.S."/>
            <person name="Ingles C.J."/>
            <person name="Hughes T.R."/>
            <person name="Parkinson J."/>
            <person name="Gerstein M."/>
            <person name="Wodak S.J."/>
            <person name="Emili A."/>
            <person name="Greenblatt J.F."/>
        </authorList>
    </citation>
    <scope>FUNCTION</scope>
    <scope>IDENTIFICATION IN A COMPLEX WITH RPB1; RBP2; RPB3; RPB4; RPB5; RPB7; SPT5 AND DST1</scope>
</reference>
<reference key="9">
    <citation type="journal article" date="2006" name="Proc. Natl. Acad. Sci. U.S.A.">
        <title>A large-scale full-length cDNA analysis to explore the budding yeast transcriptome.</title>
        <authorList>
            <person name="Miura F."/>
            <person name="Kawaguchi N."/>
            <person name="Sese J."/>
            <person name="Toyoda A."/>
            <person name="Hattori M."/>
            <person name="Morishita S."/>
            <person name="Ito T."/>
        </authorList>
    </citation>
    <scope>IDENTIFICATION OF INTRON</scope>
</reference>
<reference key="10">
    <citation type="journal article" date="2009" name="J. Biol. Chem.">
        <title>The yeast RNA polymerase II-associated factor Iwr1p is involved in the basal and regulated transcription of specific genes.</title>
        <authorList>
            <person name="Peiro-Chova L."/>
            <person name="Estruch F."/>
        </authorList>
    </citation>
    <scope>DISRUPTION PHENOTYPE</scope>
    <scope>SUBCELLULAR LOCATION</scope>
</reference>
<reference key="11">
    <citation type="journal article" date="2010" name="EMBO Rep.">
        <title>RNA-directed DNA methylation and plant development require an IWR1-type transcription factor.</title>
        <authorList>
            <person name="Kanno T."/>
            <person name="Bucher E."/>
            <person name="Daxinger L."/>
            <person name="Huettel B."/>
            <person name="Kreil D.P."/>
            <person name="Breinig F."/>
            <person name="Lind M."/>
            <person name="Schmitt M.J."/>
            <person name="Simon S.A."/>
            <person name="Gurazada S.G."/>
            <person name="Meyers B.C."/>
            <person name="Lorkovic Z.J."/>
            <person name="Matzke A.J."/>
            <person name="Matzke M."/>
        </authorList>
    </citation>
    <scope>FUNCTION</scope>
</reference>
<reference key="12">
    <citation type="journal article" date="2011" name="Mol. Cell">
        <title>Iwr1 directs RNA polymerase II nuclear import.</title>
        <authorList>
            <person name="Czeko E."/>
            <person name="Seizl M."/>
            <person name="Augsberger C."/>
            <person name="Mielke T."/>
            <person name="Cramer P."/>
        </authorList>
    </citation>
    <scope>FUNCTION</scope>
    <scope>ASSOCIATION WITH RNA POLYMERASE II</scope>
    <scope>NUCLEAR LOCALIZATION SIGNAL</scope>
    <scope>SUBCELLULAR LOCATION</scope>
</reference>
<reference key="13">
    <citation type="journal article" date="2012" name="Proc. Natl. Acad. Sci. U.S.A.">
        <title>N-terminal acetylome analyses and functional insights of the N-terminal acetyltransferase NatB.</title>
        <authorList>
            <person name="Van Damme P."/>
            <person name="Lasa M."/>
            <person name="Polevoda B."/>
            <person name="Gazquez C."/>
            <person name="Elosegui-Artola A."/>
            <person name="Kim D.S."/>
            <person name="De Juan-Pardo E."/>
            <person name="Demeyer K."/>
            <person name="Hole K."/>
            <person name="Larrea E."/>
            <person name="Timmerman E."/>
            <person name="Prieto J."/>
            <person name="Arnesen T."/>
            <person name="Sherman F."/>
            <person name="Gevaert K."/>
            <person name="Aldabe R."/>
        </authorList>
    </citation>
    <scope>ACETYLATION [LARGE SCALE ANALYSIS] AT SER-2</scope>
    <scope>CLEAVAGE OF INITIATOR METHIONINE [LARGE SCALE ANALYSIS]</scope>
    <scope>IDENTIFICATION BY MASS SPECTROMETRY [LARGE SCALE ANALYSIS]</scope>
</reference>
<dbReference type="EMBL" id="Z74163">
    <property type="protein sequence ID" value="CAA98683.1"/>
    <property type="status" value="ALT_SEQ"/>
    <property type="molecule type" value="Genomic_DNA"/>
</dbReference>
<dbReference type="EMBL" id="AY558163">
    <property type="protein sequence ID" value="AAS56489.1"/>
    <property type="molecule type" value="Genomic_DNA"/>
</dbReference>
<dbReference type="EMBL" id="EF123147">
    <property type="protein sequence ID" value="ABM97491.1"/>
    <property type="status" value="ALT_INIT"/>
    <property type="molecule type" value="mRNA"/>
</dbReference>
<dbReference type="EMBL" id="BK006938">
    <property type="protein sequence ID" value="DAA11745.1"/>
    <property type="molecule type" value="Genomic_DNA"/>
</dbReference>
<dbReference type="PIR" id="S67658">
    <property type="entry name" value="S67658"/>
</dbReference>
<dbReference type="RefSeq" id="NP_010168.4">
    <property type="nucleotide sequence ID" value="NM_001180174.1"/>
</dbReference>
<dbReference type="BioGRID" id="31947">
    <property type="interactions" value="302"/>
</dbReference>
<dbReference type="DIP" id="DIP-6726N"/>
<dbReference type="FunCoup" id="Q07532">
    <property type="interactions" value="89"/>
</dbReference>
<dbReference type="IntAct" id="Q07532">
    <property type="interactions" value="38"/>
</dbReference>
<dbReference type="MINT" id="Q07532"/>
<dbReference type="STRING" id="4932.YDL115C"/>
<dbReference type="iPTMnet" id="Q07532"/>
<dbReference type="PaxDb" id="4932-YDL115C"/>
<dbReference type="PeptideAtlas" id="Q07532"/>
<dbReference type="EnsemblFungi" id="YDL115C_mRNA">
    <property type="protein sequence ID" value="YDL115C"/>
    <property type="gene ID" value="YDL115C"/>
</dbReference>
<dbReference type="GeneID" id="851442"/>
<dbReference type="KEGG" id="sce:YDL115C"/>
<dbReference type="AGR" id="SGD:S000002273"/>
<dbReference type="SGD" id="S000002273">
    <property type="gene designation" value="IWR1"/>
</dbReference>
<dbReference type="VEuPathDB" id="FungiDB:YDL115C"/>
<dbReference type="eggNOG" id="KOG4852">
    <property type="taxonomic scope" value="Eukaryota"/>
</dbReference>
<dbReference type="HOGENOM" id="CLU_044104_0_0_1"/>
<dbReference type="InParanoid" id="Q07532"/>
<dbReference type="OMA" id="EYPRNEF"/>
<dbReference type="OrthoDB" id="6255506at2759"/>
<dbReference type="BioCyc" id="YEAST:G3O-29515-MONOMER"/>
<dbReference type="BioGRID-ORCS" id="851442">
    <property type="hits" value="0 hits in 10 CRISPR screens"/>
</dbReference>
<dbReference type="PRO" id="PR:Q07532"/>
<dbReference type="Proteomes" id="UP000002311">
    <property type="component" value="Chromosome IV"/>
</dbReference>
<dbReference type="RNAct" id="Q07532">
    <property type="molecule type" value="protein"/>
</dbReference>
<dbReference type="GO" id="GO:0005737">
    <property type="term" value="C:cytoplasm"/>
    <property type="evidence" value="ECO:0000314"/>
    <property type="project" value="SGD"/>
</dbReference>
<dbReference type="GO" id="GO:0005634">
    <property type="term" value="C:nucleus"/>
    <property type="evidence" value="ECO:0000314"/>
    <property type="project" value="SGD"/>
</dbReference>
<dbReference type="GO" id="GO:0006913">
    <property type="term" value="P:nucleocytoplasmic transport"/>
    <property type="evidence" value="ECO:0000315"/>
    <property type="project" value="SGD"/>
</dbReference>
<dbReference type="GO" id="GO:0006606">
    <property type="term" value="P:protein import into nucleus"/>
    <property type="evidence" value="ECO:0000315"/>
    <property type="project" value="SGD"/>
</dbReference>
<dbReference type="InterPro" id="IPR040150">
    <property type="entry name" value="Iwr1"/>
</dbReference>
<dbReference type="InterPro" id="IPR013883">
    <property type="entry name" value="TF_Iwr1_dom"/>
</dbReference>
<dbReference type="PANTHER" id="PTHR28063">
    <property type="entry name" value="RNA POLYMERASE II NUCLEAR LOCALIZATION PROTEIN IWR1"/>
    <property type="match status" value="1"/>
</dbReference>
<dbReference type="PANTHER" id="PTHR28063:SF1">
    <property type="entry name" value="RNA POLYMERASE II NUCLEAR LOCALIZATION PROTEIN IWR1"/>
    <property type="match status" value="1"/>
</dbReference>
<dbReference type="Pfam" id="PF08574">
    <property type="entry name" value="Iwr1"/>
    <property type="match status" value="1"/>
</dbReference>
<comment type="function">
    <text evidence="2 4 6 7">Directs RNA polymerase II nuclear import. Binds RNA polymerase II in the active center cleft between the two largest subunits in the cytoplasm. Then uses an N-terminal bipartite nuclear localization signal that may be recognized by karyopherin alpha to direct the polymerase II complex nuclear import. In the nucleus, is displaced from polymerase II complex by transcription initiation factors and nucleic acids, enabling its export and recycling.</text>
</comment>
<comment type="subunit">
    <text evidence="4">Associates with RNA polymerase II. Part of a complex consisting of RPB1, RBP2, RPB3, RPB4, RPB5, RPB7, SPT5, DST1 and IWR1.</text>
</comment>
<comment type="subcellular location">
    <subcellularLocation>
        <location>Cytoplasm</location>
    </subcellularLocation>
    <subcellularLocation>
        <location>Nucleus</location>
    </subcellularLocation>
    <text>Shuttles between the nucleus and cytoplasm.</text>
</comment>
<comment type="disruption phenotype">
    <text evidence="5">Leads to a K1 killer toxin hypersensitivity and pleiotropic effects on gene expression.</text>
</comment>
<comment type="miscellaneous">
    <text evidence="3">Present with 1080 molecules/cell in log phase SD medium.</text>
</comment>
<comment type="similarity">
    <text evidence="8">Belongs to the IWR1/SLC7A6OS family.</text>
</comment>
<comment type="caution">
    <text evidence="9 10">Due to the effects of deletion on gene expression, was originally thought to be a general transcription factor (PubMed:19679657). Further studies clearly suggest that it is involved in nuclear localization of the RNA polymerase II complex (PubMed:21504834).</text>
</comment>
<comment type="sequence caution" evidence="8">
    <conflict type="erroneous initiation">
        <sequence resource="EMBL-CDS" id="ABM97491"/>
    </conflict>
    <text>Truncated N-terminus.</text>
</comment>
<comment type="sequence caution" evidence="8">
    <conflict type="erroneous gene model prediction">
        <sequence resource="EMBL-CDS" id="CAA98683"/>
    </conflict>
</comment>
<proteinExistence type="evidence at protein level"/>
<accession>Q07532</accession>
<accession>A2TBP4</accession>
<accession>D6VRN5</accession>